<dbReference type="EC" id="3.4.21.105" evidence="2"/>
<dbReference type="EMBL" id="AC025417">
    <property type="protein sequence ID" value="AAF88090.1"/>
    <property type="status" value="ALT_INIT"/>
    <property type="molecule type" value="Genomic_DNA"/>
</dbReference>
<dbReference type="EMBL" id="CP002684">
    <property type="protein sequence ID" value="AEE28921.1"/>
    <property type="molecule type" value="Genomic_DNA"/>
</dbReference>
<dbReference type="EMBL" id="CP002684">
    <property type="protein sequence ID" value="AEE28923.1"/>
    <property type="molecule type" value="Genomic_DNA"/>
</dbReference>
<dbReference type="EMBL" id="CP002684">
    <property type="protein sequence ID" value="ANM60285.1"/>
    <property type="molecule type" value="Genomic_DNA"/>
</dbReference>
<dbReference type="EMBL" id="CP002684">
    <property type="protein sequence ID" value="ANM60286.1"/>
    <property type="molecule type" value="Genomic_DNA"/>
</dbReference>
<dbReference type="EMBL" id="CP002684">
    <property type="protein sequence ID" value="ANM60288.1"/>
    <property type="molecule type" value="Genomic_DNA"/>
</dbReference>
<dbReference type="EMBL" id="AY065251">
    <property type="protein sequence ID" value="AAL38727.1"/>
    <property type="molecule type" value="mRNA"/>
</dbReference>
<dbReference type="EMBL" id="AY091318">
    <property type="protein sequence ID" value="AAM14257.1"/>
    <property type="molecule type" value="mRNA"/>
</dbReference>
<dbReference type="PIR" id="G86260">
    <property type="entry name" value="G86260"/>
</dbReference>
<dbReference type="RefSeq" id="NP_001184975.1">
    <property type="nucleotide sequence ID" value="NM_001198046.2"/>
</dbReference>
<dbReference type="RefSeq" id="NP_001322583.1">
    <property type="nucleotide sequence ID" value="NM_001332051.1"/>
</dbReference>
<dbReference type="RefSeq" id="NP_001322584.1">
    <property type="nucleotide sequence ID" value="NM_001332050.1"/>
</dbReference>
<dbReference type="RefSeq" id="NP_001322586.1">
    <property type="nucleotide sequence ID" value="NM_001332048.1"/>
</dbReference>
<dbReference type="RefSeq" id="NP_172735.1">
    <property type="nucleotide sequence ID" value="NM_101145.3"/>
</dbReference>
<dbReference type="SMR" id="Q8VZ48"/>
<dbReference type="FunCoup" id="Q8VZ48">
    <property type="interactions" value="35"/>
</dbReference>
<dbReference type="IntAct" id="Q8VZ48">
    <property type="interactions" value="4"/>
</dbReference>
<dbReference type="STRING" id="3702.Q8VZ48"/>
<dbReference type="MEROPS" id="S54.A04"/>
<dbReference type="SwissPalm" id="Q8VZ48"/>
<dbReference type="PaxDb" id="3702-AT1G12750.3"/>
<dbReference type="ProteomicsDB" id="225970"/>
<dbReference type="EnsemblPlants" id="AT1G12750.1">
    <property type="protein sequence ID" value="AT1G12750.1"/>
    <property type="gene ID" value="AT1G12750"/>
</dbReference>
<dbReference type="EnsemblPlants" id="AT1G12750.3">
    <property type="protein sequence ID" value="AT1G12750.3"/>
    <property type="gene ID" value="AT1G12750"/>
</dbReference>
<dbReference type="EnsemblPlants" id="AT1G12750.4">
    <property type="protein sequence ID" value="AT1G12750.4"/>
    <property type="gene ID" value="AT1G12750"/>
</dbReference>
<dbReference type="EnsemblPlants" id="AT1G12750.6">
    <property type="protein sequence ID" value="AT1G12750.6"/>
    <property type="gene ID" value="AT1G12750"/>
</dbReference>
<dbReference type="EnsemblPlants" id="AT1G12750.7">
    <property type="protein sequence ID" value="AT1G12750.7"/>
    <property type="gene ID" value="AT1G12750"/>
</dbReference>
<dbReference type="GeneID" id="837831"/>
<dbReference type="Gramene" id="AT1G12750.1">
    <property type="protein sequence ID" value="AT1G12750.1"/>
    <property type="gene ID" value="AT1G12750"/>
</dbReference>
<dbReference type="Gramene" id="AT1G12750.3">
    <property type="protein sequence ID" value="AT1G12750.3"/>
    <property type="gene ID" value="AT1G12750"/>
</dbReference>
<dbReference type="Gramene" id="AT1G12750.4">
    <property type="protein sequence ID" value="AT1G12750.4"/>
    <property type="gene ID" value="AT1G12750"/>
</dbReference>
<dbReference type="Gramene" id="AT1G12750.6">
    <property type="protein sequence ID" value="AT1G12750.6"/>
    <property type="gene ID" value="AT1G12750"/>
</dbReference>
<dbReference type="Gramene" id="AT1G12750.7">
    <property type="protein sequence ID" value="AT1G12750.7"/>
    <property type="gene ID" value="AT1G12750"/>
</dbReference>
<dbReference type="KEGG" id="ath:AT1G12750"/>
<dbReference type="Araport" id="AT1G12750"/>
<dbReference type="TAIR" id="AT1G12750">
    <property type="gene designation" value="RBL6"/>
</dbReference>
<dbReference type="eggNOG" id="KOG2289">
    <property type="taxonomic scope" value="Eukaryota"/>
</dbReference>
<dbReference type="HOGENOM" id="CLU_011531_0_0_1"/>
<dbReference type="InParanoid" id="Q8VZ48"/>
<dbReference type="OMA" id="KWCHRLD"/>
<dbReference type="PhylomeDB" id="Q8VZ48"/>
<dbReference type="PRO" id="PR:Q8VZ48"/>
<dbReference type="Proteomes" id="UP000006548">
    <property type="component" value="Chromosome 1"/>
</dbReference>
<dbReference type="ExpressionAtlas" id="Q8VZ48">
    <property type="expression patterns" value="baseline and differential"/>
</dbReference>
<dbReference type="GO" id="GO:0031966">
    <property type="term" value="C:mitochondrial membrane"/>
    <property type="evidence" value="ECO:0007669"/>
    <property type="project" value="UniProtKB-SubCell"/>
</dbReference>
<dbReference type="GO" id="GO:0004252">
    <property type="term" value="F:serine-type endopeptidase activity"/>
    <property type="evidence" value="ECO:0007669"/>
    <property type="project" value="InterPro"/>
</dbReference>
<dbReference type="GO" id="GO:0006508">
    <property type="term" value="P:proteolysis"/>
    <property type="evidence" value="ECO:0007669"/>
    <property type="project" value="UniProtKB-KW"/>
</dbReference>
<dbReference type="FunFam" id="1.20.1540.10:FF:000019">
    <property type="entry name" value="RHOMBOID-like protein"/>
    <property type="match status" value="1"/>
</dbReference>
<dbReference type="Gene3D" id="1.20.1540.10">
    <property type="entry name" value="Rhomboid-like"/>
    <property type="match status" value="1"/>
</dbReference>
<dbReference type="InterPro" id="IPR002610">
    <property type="entry name" value="Peptidase_S54_rhomboid-like"/>
</dbReference>
<dbReference type="InterPro" id="IPR022764">
    <property type="entry name" value="Peptidase_S54_rhomboid_dom"/>
</dbReference>
<dbReference type="InterPro" id="IPR035952">
    <property type="entry name" value="Rhomboid-like_sf"/>
</dbReference>
<dbReference type="PANTHER" id="PTHR22936:SF80">
    <property type="entry name" value="RHOMBOID-LIKE PROTEIN 6, MITOCHONDRIAL"/>
    <property type="match status" value="1"/>
</dbReference>
<dbReference type="PANTHER" id="PTHR22936">
    <property type="entry name" value="RHOMBOID-RELATED"/>
    <property type="match status" value="1"/>
</dbReference>
<dbReference type="Pfam" id="PF01694">
    <property type="entry name" value="Rhomboid"/>
    <property type="match status" value="1"/>
</dbReference>
<dbReference type="SUPFAM" id="SSF144091">
    <property type="entry name" value="Rhomboid-like"/>
    <property type="match status" value="1"/>
</dbReference>
<comment type="function">
    <text evidence="6">Probable rhomboid-type serine protease that catalyzes intramembrane proteolysis. Might be involved in response to abiotic stimuli.</text>
</comment>
<comment type="catalytic activity">
    <reaction evidence="2">
        <text>Cleaves type-1 transmembrane domains using a catalytic dyad composed of serine and histidine that are contributed by different transmembrane domains.</text>
        <dbReference type="EC" id="3.4.21.105"/>
    </reaction>
</comment>
<comment type="subcellular location">
    <subcellularLocation>
        <location evidence="3">Mitochondrion membrane</location>
        <topology evidence="3">Multi-pass membrane protein</topology>
    </subcellularLocation>
    <text evidence="8">Might be neither mitochondrial nor chloroplastic.</text>
</comment>
<comment type="similarity">
    <text evidence="7">Belongs to the peptidase S54 family.</text>
</comment>
<comment type="sequence caution" evidence="7">
    <conflict type="erroneous initiation">
        <sequence resource="EMBL-CDS" id="AAF88090"/>
    </conflict>
    <text>Truncated N-terminus.</text>
</comment>
<gene>
    <name evidence="4 5" type="primary">RBL6</name>
    <name evidence="9" type="ordered locus">At1g12750</name>
    <name evidence="10" type="ORF">T12C24.28</name>
</gene>
<reference key="1">
    <citation type="journal article" date="2000" name="Nature">
        <title>Sequence and analysis of chromosome 1 of the plant Arabidopsis thaliana.</title>
        <authorList>
            <person name="Theologis A."/>
            <person name="Ecker J.R."/>
            <person name="Palm C.J."/>
            <person name="Federspiel N.A."/>
            <person name="Kaul S."/>
            <person name="White O."/>
            <person name="Alonso J."/>
            <person name="Altafi H."/>
            <person name="Araujo R."/>
            <person name="Bowman C.L."/>
            <person name="Brooks S.Y."/>
            <person name="Buehler E."/>
            <person name="Chan A."/>
            <person name="Chao Q."/>
            <person name="Chen H."/>
            <person name="Cheuk R.F."/>
            <person name="Chin C.W."/>
            <person name="Chung M.K."/>
            <person name="Conn L."/>
            <person name="Conway A.B."/>
            <person name="Conway A.R."/>
            <person name="Creasy T.H."/>
            <person name="Dewar K."/>
            <person name="Dunn P."/>
            <person name="Etgu P."/>
            <person name="Feldblyum T.V."/>
            <person name="Feng J.-D."/>
            <person name="Fong B."/>
            <person name="Fujii C.Y."/>
            <person name="Gill J.E."/>
            <person name="Goldsmith A.D."/>
            <person name="Haas B."/>
            <person name="Hansen N.F."/>
            <person name="Hughes B."/>
            <person name="Huizar L."/>
            <person name="Hunter J.L."/>
            <person name="Jenkins J."/>
            <person name="Johnson-Hopson C."/>
            <person name="Khan S."/>
            <person name="Khaykin E."/>
            <person name="Kim C.J."/>
            <person name="Koo H.L."/>
            <person name="Kremenetskaia I."/>
            <person name="Kurtz D.B."/>
            <person name="Kwan A."/>
            <person name="Lam B."/>
            <person name="Langin-Hooper S."/>
            <person name="Lee A."/>
            <person name="Lee J.M."/>
            <person name="Lenz C.A."/>
            <person name="Li J.H."/>
            <person name="Li Y.-P."/>
            <person name="Lin X."/>
            <person name="Liu S.X."/>
            <person name="Liu Z.A."/>
            <person name="Luros J.S."/>
            <person name="Maiti R."/>
            <person name="Marziali A."/>
            <person name="Militscher J."/>
            <person name="Miranda M."/>
            <person name="Nguyen M."/>
            <person name="Nierman W.C."/>
            <person name="Osborne B.I."/>
            <person name="Pai G."/>
            <person name="Peterson J."/>
            <person name="Pham P.K."/>
            <person name="Rizzo M."/>
            <person name="Rooney T."/>
            <person name="Rowley D."/>
            <person name="Sakano H."/>
            <person name="Salzberg S.L."/>
            <person name="Schwartz J.R."/>
            <person name="Shinn P."/>
            <person name="Southwick A.M."/>
            <person name="Sun H."/>
            <person name="Tallon L.J."/>
            <person name="Tambunga G."/>
            <person name="Toriumi M.J."/>
            <person name="Town C.D."/>
            <person name="Utterback T."/>
            <person name="Van Aken S."/>
            <person name="Vaysberg M."/>
            <person name="Vysotskaia V.S."/>
            <person name="Walker M."/>
            <person name="Wu D."/>
            <person name="Yu G."/>
            <person name="Fraser C.M."/>
            <person name="Venter J.C."/>
            <person name="Davis R.W."/>
        </authorList>
    </citation>
    <scope>NUCLEOTIDE SEQUENCE [LARGE SCALE GENOMIC DNA]</scope>
    <source>
        <strain>cv. Columbia</strain>
    </source>
</reference>
<reference key="2">
    <citation type="journal article" date="2017" name="Plant J.">
        <title>Araport11: a complete reannotation of the Arabidopsis thaliana reference genome.</title>
        <authorList>
            <person name="Cheng C.Y."/>
            <person name="Krishnakumar V."/>
            <person name="Chan A.P."/>
            <person name="Thibaud-Nissen F."/>
            <person name="Schobel S."/>
            <person name="Town C.D."/>
        </authorList>
    </citation>
    <scope>GENOME REANNOTATION</scope>
    <source>
        <strain>cv. Columbia</strain>
    </source>
</reference>
<reference key="3">
    <citation type="journal article" date="2003" name="Science">
        <title>Empirical analysis of transcriptional activity in the Arabidopsis genome.</title>
        <authorList>
            <person name="Yamada K."/>
            <person name="Lim J."/>
            <person name="Dale J.M."/>
            <person name="Chen H."/>
            <person name="Shinn P."/>
            <person name="Palm C.J."/>
            <person name="Southwick A.M."/>
            <person name="Wu H.C."/>
            <person name="Kim C.J."/>
            <person name="Nguyen M."/>
            <person name="Pham P.K."/>
            <person name="Cheuk R.F."/>
            <person name="Karlin-Newmann G."/>
            <person name="Liu S.X."/>
            <person name="Lam B."/>
            <person name="Sakano H."/>
            <person name="Wu T."/>
            <person name="Yu G."/>
            <person name="Miranda M."/>
            <person name="Quach H.L."/>
            <person name="Tripp M."/>
            <person name="Chang C.H."/>
            <person name="Lee J.M."/>
            <person name="Toriumi M.J."/>
            <person name="Chan M.M."/>
            <person name="Tang C.C."/>
            <person name="Onodera C.S."/>
            <person name="Deng J.M."/>
            <person name="Akiyama K."/>
            <person name="Ansari Y."/>
            <person name="Arakawa T."/>
            <person name="Banh J."/>
            <person name="Banno F."/>
            <person name="Bowser L."/>
            <person name="Brooks S.Y."/>
            <person name="Carninci P."/>
            <person name="Chao Q."/>
            <person name="Choy N."/>
            <person name="Enju A."/>
            <person name="Goldsmith A.D."/>
            <person name="Gurjal M."/>
            <person name="Hansen N.F."/>
            <person name="Hayashizaki Y."/>
            <person name="Johnson-Hopson C."/>
            <person name="Hsuan V.W."/>
            <person name="Iida K."/>
            <person name="Karnes M."/>
            <person name="Khan S."/>
            <person name="Koesema E."/>
            <person name="Ishida J."/>
            <person name="Jiang P.X."/>
            <person name="Jones T."/>
            <person name="Kawai J."/>
            <person name="Kamiya A."/>
            <person name="Meyers C."/>
            <person name="Nakajima M."/>
            <person name="Narusaka M."/>
            <person name="Seki M."/>
            <person name="Sakurai T."/>
            <person name="Satou M."/>
            <person name="Tamse R."/>
            <person name="Vaysberg M."/>
            <person name="Wallender E.K."/>
            <person name="Wong C."/>
            <person name="Yamamura Y."/>
            <person name="Yuan S."/>
            <person name="Shinozaki K."/>
            <person name="Davis R.W."/>
            <person name="Theologis A."/>
            <person name="Ecker J.R."/>
        </authorList>
    </citation>
    <scope>NUCLEOTIDE SEQUENCE [LARGE SCALE MRNA]</scope>
    <source>
        <strain>cv. Columbia</strain>
    </source>
</reference>
<reference key="4">
    <citation type="journal article" date="2005" name="FEBS Lett.">
        <title>An Arabidopsis Rhomboid homolog is an intramembrane protease in plants.</title>
        <authorList>
            <person name="Kanaoka M.M."/>
            <person name="Urban S."/>
            <person name="Freeman M."/>
            <person name="Okada K."/>
        </authorList>
    </citation>
    <scope>GENE FAMILY</scope>
    <scope>NOMENCLATURE</scope>
    <source>
        <strain>cv. Columbia</strain>
    </source>
</reference>
<reference key="5">
    <citation type="journal article" date="2006" name="BMC Genomics">
        <title>Cross genome comparisons of serine proteases in Arabidopsis and rice.</title>
        <authorList>
            <person name="Tripathi L.P."/>
            <person name="Sowdhamini R."/>
        </authorList>
    </citation>
    <scope>GENE FAMILY</scope>
    <scope>NOMENCLATURE</scope>
</reference>
<reference key="6">
    <citation type="journal article" date="2006" name="BMC Plant Biol.">
        <title>Protease gene families in Populus and Arabidopsis.</title>
        <authorList>
            <person name="Garcia-Lorenzo M."/>
            <person name="Sjodin A."/>
            <person name="Jansson S."/>
            <person name="Funk C."/>
        </authorList>
    </citation>
    <scope>GENE FAMILY</scope>
    <scope>NOMENCLATURE</scope>
</reference>
<reference key="7">
    <citation type="journal article" date="2007" name="Genome Res.">
        <title>Functional and evolutionary implications of enhanced genomic analysis of rhomboid intramembrane proteases.</title>
        <authorList>
            <person name="Lemberg M.K."/>
            <person name="Freeman M."/>
        </authorList>
    </citation>
    <scope>GENE FAMILY</scope>
    <scope>NOMENCLATURE</scope>
</reference>
<reference key="8">
    <citation type="journal article" date="2008" name="Plant Mol. Biol.">
        <title>Plant mitochondrial rhomboid, AtRBL12, has different substrate specificity from its yeast counterpart.</title>
        <authorList>
            <person name="Kmiec-Wisniewska B."/>
            <person name="Krumpe K."/>
            <person name="Urantowka A."/>
            <person name="Sakamoto W."/>
            <person name="Pratje E."/>
            <person name="Janska H."/>
        </authorList>
    </citation>
    <scope>SUBCELLULAR LOCATION</scope>
</reference>
<reference key="9">
    <citation type="journal article" date="2012" name="Physiol. Plantarum">
        <title>Rhomboid proteases in plants - still in square one?</title>
        <authorList>
            <person name="Knopf R.R."/>
            <person name="Adam Z."/>
        </authorList>
    </citation>
    <scope>REVIEW</scope>
</reference>
<sequence length="307" mass="34289">MRSRDMERGRKHRGDTQWTAWLTPTIVVANVSIFIVVMYTNDCPKTTTGANGDCVAKLLRRFSFQPLRENPFLGPSSSTLEKLGALDWKKVVQGNEKWRLITAMWLHAGIIHLVMNMFDVIIFGIRLEQQFGFIRIGLIYLISGFGGSILSALFLQKSISVGASGALLGLMGAMLSELLTNWTIYKSKLCALLSFLFIIAINLAIGLLPWVDNFAHIGGLLTGFCLGFILLMQPQSGWEEFRNSSQYGARARSKYNPCQYVLFFVAAVLVVAGLTVGLVMLFDGENGNKHCKWCHRLDCYPTSKWSC</sequence>
<evidence type="ECO:0000250" key="1">
    <source>
        <dbReference type="UniProtKB" id="P54493"/>
    </source>
</evidence>
<evidence type="ECO:0000250" key="2">
    <source>
        <dbReference type="UniProtKB" id="Q9CAN1"/>
    </source>
</evidence>
<evidence type="ECO:0000255" key="3"/>
<evidence type="ECO:0000303" key="4">
    <source>
    </source>
</evidence>
<evidence type="ECO:0000303" key="5">
    <source>
    </source>
</evidence>
<evidence type="ECO:0000303" key="6">
    <source>
    </source>
</evidence>
<evidence type="ECO:0000305" key="7"/>
<evidence type="ECO:0000305" key="8">
    <source>
    </source>
</evidence>
<evidence type="ECO:0000312" key="9">
    <source>
        <dbReference type="Araport" id="AT1G12750"/>
    </source>
</evidence>
<evidence type="ECO:0000312" key="10">
    <source>
        <dbReference type="EMBL" id="AAF88090.1"/>
    </source>
</evidence>
<evidence type="ECO:0000312" key="11">
    <source>
        <dbReference type="EMBL" id="AAL38727.1"/>
    </source>
</evidence>
<organism evidence="11">
    <name type="scientific">Arabidopsis thaliana</name>
    <name type="common">Mouse-ear cress</name>
    <dbReference type="NCBI Taxonomy" id="3702"/>
    <lineage>
        <taxon>Eukaryota</taxon>
        <taxon>Viridiplantae</taxon>
        <taxon>Streptophyta</taxon>
        <taxon>Embryophyta</taxon>
        <taxon>Tracheophyta</taxon>
        <taxon>Spermatophyta</taxon>
        <taxon>Magnoliopsida</taxon>
        <taxon>eudicotyledons</taxon>
        <taxon>Gunneridae</taxon>
        <taxon>Pentapetalae</taxon>
        <taxon>rosids</taxon>
        <taxon>malvids</taxon>
        <taxon>Brassicales</taxon>
        <taxon>Brassicaceae</taxon>
        <taxon>Camelineae</taxon>
        <taxon>Arabidopsis</taxon>
    </lineage>
</organism>
<protein>
    <recommendedName>
        <fullName evidence="4 5">RHOMBOID-like protein 6, mitochondrial</fullName>
        <shortName evidence="4 5">AtRBL6</shortName>
        <ecNumber evidence="2">3.4.21.105</ecNumber>
    </recommendedName>
</protein>
<feature type="transit peptide" description="Mitochondrion" evidence="3">
    <location>
        <begin position="1"/>
        <end position="62"/>
    </location>
</feature>
<feature type="chain" id="PRO_0000433327" description="RHOMBOID-like protein 6, mitochondrial" evidence="3">
    <location>
        <begin position="63"/>
        <end position="307"/>
    </location>
</feature>
<feature type="transmembrane region" description="Helical" evidence="3">
    <location>
        <begin position="105"/>
        <end position="125"/>
    </location>
</feature>
<feature type="transmembrane region" description="Helical" evidence="3">
    <location>
        <begin position="136"/>
        <end position="156"/>
    </location>
</feature>
<feature type="transmembrane region" description="Helical" evidence="3">
    <location>
        <begin position="159"/>
        <end position="179"/>
    </location>
</feature>
<feature type="transmembrane region" description="Helical" evidence="3">
    <location>
        <begin position="191"/>
        <end position="211"/>
    </location>
</feature>
<feature type="transmembrane region" description="Helical" evidence="3">
    <location>
        <begin position="214"/>
        <end position="234"/>
    </location>
</feature>
<feature type="transmembrane region" description="Helical" evidence="3">
    <location>
        <begin position="262"/>
        <end position="282"/>
    </location>
</feature>
<feature type="active site" description="Nucleophile" evidence="1">
    <location>
        <position position="164"/>
    </location>
</feature>
<feature type="active site" description="Charge relay system" evidence="1">
    <location>
        <position position="216"/>
    </location>
</feature>
<keyword id="KW-0378">Hydrolase</keyword>
<keyword id="KW-0472">Membrane</keyword>
<keyword id="KW-0496">Mitochondrion</keyword>
<keyword id="KW-0645">Protease</keyword>
<keyword id="KW-1185">Reference proteome</keyword>
<keyword id="KW-0720">Serine protease</keyword>
<keyword id="KW-0809">Transit peptide</keyword>
<keyword id="KW-0812">Transmembrane</keyword>
<keyword id="KW-1133">Transmembrane helix</keyword>
<proteinExistence type="evidence at transcript level"/>
<name>RBL6_ARATH</name>
<accession>Q8VZ48</accession>
<accession>Q9LN72</accession>